<reference key="1">
    <citation type="journal article" date="1986" name="J. Mol. Biol.">
        <title>Sequence of the short unique region, short repeats, and part of the long repeats of human cytomegalovirus.</title>
        <authorList>
            <person name="Weston K.M."/>
            <person name="Barrell B.G."/>
        </authorList>
    </citation>
    <scope>NUCLEOTIDE SEQUENCE [GENOMIC DNA]</scope>
</reference>
<reference key="2">
    <citation type="journal article" date="1990" name="Curr. Top. Microbiol. Immunol.">
        <title>Analysis of the protein-coding content of the sequence of human cytomegalovirus strain AD169.</title>
        <authorList>
            <person name="Chee M.S."/>
            <person name="Bankier A.T."/>
            <person name="Beck S."/>
            <person name="Bohni R."/>
            <person name="Brown C.M."/>
            <person name="Cerny R."/>
            <person name="Horsnell T."/>
            <person name="Hutchison C.A. III"/>
            <person name="Kouzarides T."/>
            <person name="Martignetti J.A."/>
            <person name="Preddie E."/>
            <person name="Satchwell S.C."/>
            <person name="Tomlinson P."/>
            <person name="Weston K.M."/>
            <person name="Barrell B.G."/>
        </authorList>
    </citation>
    <scope>NUCLEOTIDE SEQUENCE [LARGE SCALE GENOMIC DNA]</scope>
</reference>
<reference key="3">
    <citation type="journal article" date="1990" name="Nature">
        <title>Human cytomegalovirus encodes three G protein-coupled receptor homologues.</title>
        <authorList>
            <person name="Chee M.S."/>
            <person name="Satchwell S.C."/>
            <person name="Preddie E."/>
            <person name="Weston K.M."/>
            <person name="Barrell B.G."/>
        </authorList>
    </citation>
    <scope>SIMILARITY TO G-PROTEIN COUPLED RECEPTORS</scope>
</reference>
<reference key="4">
    <citation type="journal article" date="2003" name="J. Gen. Virol.">
        <title>The human cytomegalovirus genome revisited: comparison with the chimpanzee cytomegalovirus genome.</title>
        <authorList>
            <person name="Davison A.J."/>
            <person name="Dolan A."/>
            <person name="Akter P."/>
            <person name="Addison C."/>
            <person name="Dargan D.J."/>
            <person name="Alcendor D.J."/>
            <person name="McGeoch D.J."/>
            <person name="Hayward G.S."/>
        </authorList>
    </citation>
    <scope>GENOME REANNOTATION</scope>
</reference>
<reference key="5">
    <citation type="journal article" date="2003" name="J. Gen. Virol.">
        <authorList>
            <person name="Davison A.J."/>
            <person name="Dolan A."/>
            <person name="Akter P."/>
            <person name="Addison C."/>
            <person name="Dargan D.J."/>
            <person name="Alcendor D.J."/>
            <person name="McGeoch D.J."/>
            <person name="Hayward G.S."/>
        </authorList>
    </citation>
    <scope>ERRATUM OF PUBMED:12533697</scope>
</reference>
<reference key="6">
    <citation type="journal article" date="2002" name="Traffic">
        <title>Localization of HCMV UL33 and US27 in endocytic compartments and viral membranes.</title>
        <authorList>
            <person name="Fraile-Ramos A."/>
            <person name="Pelchen-Matthews A."/>
            <person name="Kledal T.N."/>
            <person name="Browne H."/>
            <person name="Schwartz T.W."/>
            <person name="Marsh M."/>
        </authorList>
    </citation>
    <scope>SUBCELLULAR LOCATION</scope>
</reference>
<reference key="7">
    <citation type="journal article" date="2004" name="J. Virol.">
        <title>Identification of proteins in human cytomegalovirus (HCMV) particles: the HCMV proteome.</title>
        <authorList>
            <person name="Varnum S.M."/>
            <person name="Streblow D.N."/>
            <person name="Monroe M.E."/>
            <person name="Smith P."/>
            <person name="Auberry K.J."/>
            <person name="Pasa-Tolic L."/>
            <person name="Wang D."/>
            <person name="Camp D.G. II"/>
            <person name="Rodland K."/>
            <person name="Wiley S."/>
            <person name="Britt W."/>
            <person name="Shenk T."/>
            <person name="Smith R.D."/>
            <person name="Nelson J.A."/>
        </authorList>
    </citation>
    <scope>IDENTIFICATION</scope>
</reference>
<reference key="8">
    <citation type="journal article" date="2004" name="J. Virol.">
        <authorList>
            <person name="Varnum S.M."/>
            <person name="Streblow D.N."/>
            <person name="Monroe M.E."/>
            <person name="Smith P."/>
            <person name="Auberry K.J."/>
            <person name="Pasa-Tolic L."/>
            <person name="Wang D."/>
            <person name="Camp D.G. II"/>
            <person name="Rodland K."/>
            <person name="Wiley S."/>
            <person name="Britt W."/>
            <person name="Shenk T."/>
            <person name="Smith R.D."/>
            <person name="Nelson J.A."/>
        </authorList>
    </citation>
    <scope>ERRATUM OF PUBMED:15452216</scope>
</reference>
<reference key="9">
    <citation type="journal article" date="2011" name="Biochem. Pharmacol.">
        <title>Heteromerization of human cytomegalovirus encoded chemokine receptors.</title>
        <authorList>
            <person name="Tschische P."/>
            <person name="Tadagaki K."/>
            <person name="Kamal M."/>
            <person name="Jockers R."/>
            <person name="Waldhoer M."/>
        </authorList>
    </citation>
    <scope>INTERACTION WITH US28</scope>
</reference>
<reference key="10">
    <citation type="journal article" date="2022" name="Sci. Adv.">
        <title>Atypical structural snapshots of human cytomegalovirus GPCR interactions with host G proteins.</title>
        <authorList>
            <person name="Tsutsumi N."/>
            <person name="Maeda S."/>
            <person name="Qu Q."/>
            <person name="Voegele M."/>
            <person name="Jude K.M."/>
            <person name="Suomivuori C.M."/>
            <person name="Panova O."/>
            <person name="Waghray D."/>
            <person name="Kato H.E."/>
            <person name="Velasco A."/>
            <person name="Dror R.O."/>
            <person name="Skiniotis G."/>
            <person name="Kobilka B.K."/>
            <person name="Garcia K.C."/>
        </authorList>
    </citation>
    <scope>STRUCTURE BY ELECTRON MICROSCOPY (3.10 ANGSTROMS) IN COMPLEX WITH HOST GNAI1; GNB1 AND GNG2</scope>
    <scope>FUNCTION</scope>
    <scope>INTERACTION WITH HOST GNAI1</scope>
</reference>
<dbReference type="EMBL" id="X17403">
    <property type="protein sequence ID" value="CAA35259.1"/>
    <property type="molecule type" value="Genomic_DNA"/>
</dbReference>
<dbReference type="EMBL" id="X04650">
    <property type="protein sequence ID" value="CAA28337.1"/>
    <property type="molecule type" value="Genomic_DNA"/>
</dbReference>
<dbReference type="EMBL" id="BK000394">
    <property type="protein sequence ID" value="DAA00214.1"/>
    <property type="molecule type" value="Genomic_DNA"/>
</dbReference>
<dbReference type="PIR" id="B27216">
    <property type="entry name" value="QQBED2"/>
</dbReference>
<dbReference type="PDB" id="7RKX">
    <property type="method" value="EM"/>
    <property type="resolution" value="3.10 A"/>
    <property type="chains" value="R=1-362"/>
</dbReference>
<dbReference type="PDB" id="7RKY">
    <property type="method" value="EM"/>
    <property type="resolution" value="3.80 A"/>
    <property type="chains" value="R=1-362"/>
</dbReference>
<dbReference type="PDBsum" id="7RKX"/>
<dbReference type="PDBsum" id="7RKY"/>
<dbReference type="EMDB" id="EMD-24506"/>
<dbReference type="EMDB" id="EMD-24507"/>
<dbReference type="SMR" id="P09703"/>
<dbReference type="GlyCosmos" id="P09703">
    <property type="glycosylation" value="4 sites, No reported glycans"/>
</dbReference>
<dbReference type="Proteomes" id="UP000008991">
    <property type="component" value="Segment"/>
</dbReference>
<dbReference type="Proteomes" id="UP000008992">
    <property type="component" value="Segment"/>
</dbReference>
<dbReference type="GO" id="GO:0020002">
    <property type="term" value="C:host cell plasma membrane"/>
    <property type="evidence" value="ECO:0007669"/>
    <property type="project" value="UniProtKB-SubCell"/>
</dbReference>
<dbReference type="GO" id="GO:0016020">
    <property type="term" value="C:membrane"/>
    <property type="evidence" value="ECO:0007669"/>
    <property type="project" value="UniProtKB-KW"/>
</dbReference>
<dbReference type="GO" id="GO:0044423">
    <property type="term" value="C:virion component"/>
    <property type="evidence" value="ECO:0007669"/>
    <property type="project" value="UniProtKB-KW"/>
</dbReference>
<dbReference type="GO" id="GO:0019957">
    <property type="term" value="F:C-C chemokine binding"/>
    <property type="evidence" value="ECO:0007669"/>
    <property type="project" value="TreeGrafter"/>
</dbReference>
<dbReference type="GO" id="GO:0016493">
    <property type="term" value="F:C-C chemokine receptor activity"/>
    <property type="evidence" value="ECO:0007669"/>
    <property type="project" value="TreeGrafter"/>
</dbReference>
<dbReference type="GO" id="GO:0019722">
    <property type="term" value="P:calcium-mediated signaling"/>
    <property type="evidence" value="ECO:0007669"/>
    <property type="project" value="TreeGrafter"/>
</dbReference>
<dbReference type="GO" id="GO:0060326">
    <property type="term" value="P:cell chemotaxis"/>
    <property type="evidence" value="ECO:0007669"/>
    <property type="project" value="TreeGrafter"/>
</dbReference>
<dbReference type="GO" id="GO:0006955">
    <property type="term" value="P:immune response"/>
    <property type="evidence" value="ECO:0007669"/>
    <property type="project" value="TreeGrafter"/>
</dbReference>
<dbReference type="GO" id="GO:0007204">
    <property type="term" value="P:positive regulation of cytosolic calcium ion concentration"/>
    <property type="evidence" value="ECO:0007669"/>
    <property type="project" value="TreeGrafter"/>
</dbReference>
<dbReference type="Gene3D" id="1.20.1070.10">
    <property type="entry name" value="Rhodopsin 7-helix transmembrane proteins"/>
    <property type="match status" value="1"/>
</dbReference>
<dbReference type="InterPro" id="IPR050119">
    <property type="entry name" value="CCR1-9-like"/>
</dbReference>
<dbReference type="InterPro" id="IPR000276">
    <property type="entry name" value="GPCR_Rhodpsn"/>
</dbReference>
<dbReference type="InterPro" id="IPR017452">
    <property type="entry name" value="GPCR_Rhodpsn_7TM"/>
</dbReference>
<dbReference type="PANTHER" id="PTHR10489">
    <property type="entry name" value="CELL ADHESION MOLECULE"/>
    <property type="match status" value="1"/>
</dbReference>
<dbReference type="PANTHER" id="PTHR10489:SF932">
    <property type="entry name" value="G-PROTEIN COUPLED RECEPTORS FAMILY 1 PROFILE DOMAIN-CONTAINING PROTEIN"/>
    <property type="match status" value="1"/>
</dbReference>
<dbReference type="Pfam" id="PF00001">
    <property type="entry name" value="7tm_1"/>
    <property type="match status" value="1"/>
</dbReference>
<dbReference type="PRINTS" id="PR00237">
    <property type="entry name" value="GPCRRHODOPSN"/>
</dbReference>
<dbReference type="SUPFAM" id="SSF81321">
    <property type="entry name" value="Family A G protein-coupled receptor-like"/>
    <property type="match status" value="1"/>
</dbReference>
<dbReference type="PROSITE" id="PS00237">
    <property type="entry name" value="G_PROTEIN_RECEP_F1_1"/>
    <property type="match status" value="1"/>
</dbReference>
<dbReference type="PROSITE" id="PS50262">
    <property type="entry name" value="G_PROTEIN_RECEP_F1_2"/>
    <property type="match status" value="1"/>
</dbReference>
<gene>
    <name type="primary">US27</name>
</gene>
<name>US27_HCMVA</name>
<organismHost>
    <name type="scientific">Homo sapiens</name>
    <name type="common">Human</name>
    <dbReference type="NCBI Taxonomy" id="9606"/>
</organismHost>
<sequence length="362" mass="41994">MTTSTNNQTLTQVSNMTNHTLNSTEIYQLFEYTRLGVWLMCIVGTFLNVLVITTILYYRRKKKSPSDTYICNLAVADLLIVVGLPFFLEYAKHHPKLSREVVCSGLNACFYICLFAGVCFLINLSMDRYCVIVWGVELNRVRNNKRATCWVVIFWILAVLMGMPHYLMYSHTNNECVGEFANETSGWFPVFLNTKVNICGYLAPIALMAYTYNRMVRFIINYVGKWHMQTLHVLLVVVVSFASFWFPFNLALFLESIRLLAGVYNDTLQNVIIFCLYVGQFLAYVRACLNPGIYILVGTQMRKDMWTTLRVFACCCVKQEIPYQDIDIELQKDIQRRAKHTKRTHYDRKNAPMESGEEEFLL</sequence>
<keyword id="KW-0002">3D-structure</keyword>
<keyword id="KW-0297">G-protein coupled receptor</keyword>
<keyword id="KW-0325">Glycoprotein</keyword>
<keyword id="KW-1032">Host cell membrane</keyword>
<keyword id="KW-1043">Host membrane</keyword>
<keyword id="KW-0945">Host-virus interaction</keyword>
<keyword id="KW-1086">Inhibition of host chemokines by virus</keyword>
<keyword id="KW-0472">Membrane</keyword>
<keyword id="KW-0675">Receptor</keyword>
<keyword id="KW-1185">Reference proteome</keyword>
<keyword id="KW-0807">Transducer</keyword>
<keyword id="KW-0812">Transmembrane</keyword>
<keyword id="KW-1133">Transmembrane helix</keyword>
<keyword id="KW-0899">Viral immunoevasion</keyword>
<keyword id="KW-0946">Virion</keyword>
<protein>
    <recommendedName>
        <fullName>G-protein coupled receptor homolog US27</fullName>
    </recommendedName>
    <alternativeName>
        <fullName>HHRF2</fullName>
    </alternativeName>
</protein>
<feature type="chain" id="PRO_0000070245" description="G-protein coupled receptor homolog US27">
    <location>
        <begin position="1"/>
        <end position="362"/>
    </location>
</feature>
<feature type="topological domain" description="Virion surface" evidence="1">
    <location>
        <begin position="1"/>
        <end position="34"/>
    </location>
</feature>
<feature type="transmembrane region" description="Helical; Name=1" evidence="1">
    <location>
        <begin position="35"/>
        <end position="58"/>
    </location>
</feature>
<feature type="topological domain" description="Intravirion" evidence="1">
    <location>
        <begin position="59"/>
        <end position="67"/>
    </location>
</feature>
<feature type="transmembrane region" description="Helical; Name=2" evidence="1">
    <location>
        <begin position="68"/>
        <end position="90"/>
    </location>
</feature>
<feature type="topological domain" description="Virion surface" evidence="1">
    <location>
        <begin position="91"/>
        <end position="104"/>
    </location>
</feature>
<feature type="transmembrane region" description="Helical; Name=3" evidence="1">
    <location>
        <begin position="105"/>
        <end position="126"/>
    </location>
</feature>
<feature type="topological domain" description="Intravirion" evidence="1">
    <location>
        <begin position="127"/>
        <end position="148"/>
    </location>
</feature>
<feature type="transmembrane region" description="Helical; Name=4" evidence="1">
    <location>
        <begin position="149"/>
        <end position="167"/>
    </location>
</feature>
<feature type="topological domain" description="Virion surface" evidence="1">
    <location>
        <begin position="168"/>
        <end position="193"/>
    </location>
</feature>
<feature type="transmembrane region" description="Helical; Name=5" evidence="1">
    <location>
        <begin position="194"/>
        <end position="213"/>
    </location>
</feature>
<feature type="topological domain" description="Intravirion" evidence="1">
    <location>
        <begin position="214"/>
        <end position="233"/>
    </location>
</feature>
<feature type="transmembrane region" description="Helical; Name=6" evidence="1">
    <location>
        <begin position="234"/>
        <end position="257"/>
    </location>
</feature>
<feature type="topological domain" description="Virion surface" evidence="1">
    <location>
        <begin position="258"/>
        <end position="274"/>
    </location>
</feature>
<feature type="transmembrane region" description="Helical; Name=7" evidence="1">
    <location>
        <begin position="275"/>
        <end position="298"/>
    </location>
</feature>
<feature type="topological domain" description="Intravirion" evidence="1">
    <location>
        <begin position="299"/>
        <end position="362"/>
    </location>
</feature>
<feature type="region of interest" description="Disordered" evidence="3">
    <location>
        <begin position="341"/>
        <end position="362"/>
    </location>
</feature>
<feature type="glycosylation site" description="N-linked (GlcNAc...) asparagine; by host" evidence="1">
    <location>
        <position position="7"/>
    </location>
</feature>
<feature type="glycosylation site" description="N-linked (GlcNAc...) asparagine; by host" evidence="1">
    <location>
        <position position="15"/>
    </location>
</feature>
<feature type="glycosylation site" description="N-linked (GlcNAc...) asparagine; by host" evidence="1">
    <location>
        <position position="18"/>
    </location>
</feature>
<feature type="glycosylation site" description="N-linked (GlcNAc...) asparagine; by host" evidence="1">
    <location>
        <position position="22"/>
    </location>
</feature>
<feature type="turn" evidence="7">
    <location>
        <begin position="22"/>
        <end position="24"/>
    </location>
</feature>
<feature type="helix" evidence="7">
    <location>
        <begin position="28"/>
        <end position="32"/>
    </location>
</feature>
<feature type="helix" evidence="7">
    <location>
        <begin position="37"/>
        <end position="56"/>
    </location>
</feature>
<feature type="helix" evidence="7">
    <location>
        <begin position="59"/>
        <end position="63"/>
    </location>
</feature>
<feature type="helix" evidence="7">
    <location>
        <begin position="65"/>
        <end position="93"/>
    </location>
</feature>
<feature type="helix" evidence="7">
    <location>
        <begin position="99"/>
        <end position="132"/>
    </location>
</feature>
<feature type="helix" evidence="7">
    <location>
        <begin position="149"/>
        <end position="161"/>
    </location>
</feature>
<feature type="helix" evidence="7">
    <location>
        <begin position="163"/>
        <end position="166"/>
    </location>
</feature>
<feature type="strand" evidence="7">
    <location>
        <begin position="167"/>
        <end position="169"/>
    </location>
</feature>
<feature type="turn" evidence="7">
    <location>
        <begin position="170"/>
        <end position="173"/>
    </location>
</feature>
<feature type="strand" evidence="7">
    <location>
        <begin position="176"/>
        <end position="178"/>
    </location>
</feature>
<feature type="helix" evidence="7">
    <location>
        <begin position="187"/>
        <end position="199"/>
    </location>
</feature>
<feature type="helix" evidence="7">
    <location>
        <begin position="202"/>
        <end position="222"/>
    </location>
</feature>
<feature type="helix" evidence="7">
    <location>
        <begin position="229"/>
        <end position="244"/>
    </location>
</feature>
<feature type="helix" evidence="7">
    <location>
        <begin position="246"/>
        <end position="260"/>
    </location>
</feature>
<feature type="helix" evidence="7">
    <location>
        <begin position="267"/>
        <end position="289"/>
    </location>
</feature>
<feature type="helix" evidence="7">
    <location>
        <begin position="292"/>
        <end position="297"/>
    </location>
</feature>
<feature type="helix" evidence="7">
    <location>
        <begin position="299"/>
        <end position="308"/>
    </location>
</feature>
<accession>P09703</accession>
<accession>Q7M6H4</accession>
<organism>
    <name type="scientific">Human cytomegalovirus (strain AD169)</name>
    <name type="common">HHV-5</name>
    <name type="synonym">Human herpesvirus 5</name>
    <dbReference type="NCBI Taxonomy" id="10360"/>
    <lineage>
        <taxon>Viruses</taxon>
        <taxon>Duplodnaviria</taxon>
        <taxon>Heunggongvirae</taxon>
        <taxon>Peploviricota</taxon>
        <taxon>Herviviricetes</taxon>
        <taxon>Herpesvirales</taxon>
        <taxon>Orthoherpesviridae</taxon>
        <taxon>Betaherpesvirinae</taxon>
        <taxon>Cytomegalovirus</taxon>
        <taxon>Cytomegalovirus humanbeta5</taxon>
        <taxon>Human cytomegalovirus</taxon>
    </lineage>
</organism>
<evidence type="ECO:0000255" key="1"/>
<evidence type="ECO:0000255" key="2">
    <source>
        <dbReference type="PROSITE-ProRule" id="PRU00521"/>
    </source>
</evidence>
<evidence type="ECO:0000256" key="3">
    <source>
        <dbReference type="SAM" id="MobiDB-lite"/>
    </source>
</evidence>
<evidence type="ECO:0000269" key="4">
    <source>
    </source>
</evidence>
<evidence type="ECO:0000269" key="5">
    <source>
    </source>
</evidence>
<evidence type="ECO:0000269" key="6">
    <source>
    </source>
</evidence>
<evidence type="ECO:0007829" key="7">
    <source>
        <dbReference type="PDB" id="7RKX"/>
    </source>
</evidence>
<comment type="function">
    <text evidence="6">Interacts with the host Gi complex without activating it, thereby probably interfering with the chemokine-Gi signaling (PubMed:35061538). May also function as a G protein sink to sequester G protein from the cell surface via internalization (PubMed:35061538). Plays an important role in spread of HCMV via the extracellular route.</text>
</comment>
<comment type="subunit">
    <text evidence="5 6">Heterodimer with US28 (PubMed:21684267). Interacts with host Gi alpha-1 subunit GNAI1; this interaction does not lead to the catalytic activation of Gi complex (PubMed:35061538).</text>
</comment>
<comment type="subcellular location">
    <subcellularLocation>
        <location evidence="4">Virion</location>
    </subcellularLocation>
    <subcellularLocation>
        <location evidence="4">Host cell membrane</location>
        <topology evidence="4">Multi-pass membrane protein</topology>
    </subcellularLocation>
</comment>
<comment type="similarity">
    <text evidence="2">Belongs to the G-protein coupled receptor 1 family.</text>
</comment>
<proteinExistence type="evidence at protein level"/>